<proteinExistence type="inferred from homology"/>
<name>SYL_STRA5</name>
<gene>
    <name evidence="1" type="primary">leuS</name>
    <name type="ordered locus">SAG2057</name>
</gene>
<reference key="1">
    <citation type="journal article" date="2002" name="Proc. Natl. Acad. Sci. U.S.A.">
        <title>Complete genome sequence and comparative genomic analysis of an emerging human pathogen, serotype V Streptococcus agalactiae.</title>
        <authorList>
            <person name="Tettelin H."/>
            <person name="Masignani V."/>
            <person name="Cieslewicz M.J."/>
            <person name="Eisen J.A."/>
            <person name="Peterson S.N."/>
            <person name="Wessels M.R."/>
            <person name="Paulsen I.T."/>
            <person name="Nelson K.E."/>
            <person name="Margarit I."/>
            <person name="Read T.D."/>
            <person name="Madoff L.C."/>
            <person name="Wolf A.M."/>
            <person name="Beanan M.J."/>
            <person name="Brinkac L.M."/>
            <person name="Daugherty S.C."/>
            <person name="DeBoy R.T."/>
            <person name="Durkin A.S."/>
            <person name="Kolonay J.F."/>
            <person name="Madupu R."/>
            <person name="Lewis M.R."/>
            <person name="Radune D."/>
            <person name="Fedorova N.B."/>
            <person name="Scanlan D."/>
            <person name="Khouri H.M."/>
            <person name="Mulligan S."/>
            <person name="Carty H.A."/>
            <person name="Cline R.T."/>
            <person name="Van Aken S.E."/>
            <person name="Gill J."/>
            <person name="Scarselli M."/>
            <person name="Mora M."/>
            <person name="Iacobini E.T."/>
            <person name="Brettoni C."/>
            <person name="Galli G."/>
            <person name="Mariani M."/>
            <person name="Vegni F."/>
            <person name="Maione D."/>
            <person name="Rinaudo D."/>
            <person name="Rappuoli R."/>
            <person name="Telford J.L."/>
            <person name="Kasper D.L."/>
            <person name="Grandi G."/>
            <person name="Fraser C.M."/>
        </authorList>
    </citation>
    <scope>NUCLEOTIDE SEQUENCE [LARGE SCALE GENOMIC DNA]</scope>
    <source>
        <strain>ATCC BAA-611 / 2603 V/R</strain>
    </source>
</reference>
<sequence>MTFYNHKEIEPKWQAFWADNHTFKTGTDASKPKFYALDMFPYPSGAGLHVGHPEGYTATDILSRFKRAQGHNVLHPMGWDAFGLPAEQYAMDTGNDPAEFTAENIANFKRQINALGFSYDWDREVNTTDPNYYKWTQWIFTKLYEKGLAYEAEVPVNWVEELGTAIANEEVLPDGTSERGGYPVVRKPMRQWMLKITAYAERLLEDLEEVDWPESIKDMQRNWIGKSTGANVTFKVKDTDKDFTVFTTRPDTLFGATYAVLAPEHALVDAITTADQAEAVAEYKRQASLKSDLARTDLAKEKTGVWTGAYAINPVNGKEIPVWIADYVLASYGTGAIMAVPAHDERDWEFAKQFNLDIIPVLEGGNVEEAAFTEDGLHINSDFLDGLDKAAAIAKMVEWLEAEGVGNEKVTYRLRDWLFSRQRYWGEPIPIIHWEDGTSTAVPESELPLVLPVTKDIRPSGTGESPLANLTDWLEVTREDGVKGRRETNTMPQWAGSSWYYLRYIDPHNTEKLADEELLKQWLPVDIYVGGAEHAVLHLLYARFWHKVLYDLGVVPTKEPFQKLFNQGMILGTSYRDSRGALVATDKVEKRDGSFFHVETGEELEQAPAKMSKSLKNVVNPDDVVEQYGADTLRVYEMFMGPLDASIAWSEEGLEGSRKFLDRVYRLITTKEITEENSGALDKVYNETVKAVTEQVDQMKFNTAIAQLMVFVNAANKEDKLFSDYAKGFVQLIAPFAPHLGEELWQVLTASGQSISYVPWPSYDESKLVENEIEIVVQIKGKVKAKLVVAKDLSREELQDLALANEKVQAEIAGKDIIKVIAVPNKLVNIVVK</sequence>
<keyword id="KW-0030">Aminoacyl-tRNA synthetase</keyword>
<keyword id="KW-0067">ATP-binding</keyword>
<keyword id="KW-0963">Cytoplasm</keyword>
<keyword id="KW-0436">Ligase</keyword>
<keyword id="KW-0547">Nucleotide-binding</keyword>
<keyword id="KW-0648">Protein biosynthesis</keyword>
<keyword id="KW-1185">Reference proteome</keyword>
<comment type="catalytic activity">
    <reaction evidence="1">
        <text>tRNA(Leu) + L-leucine + ATP = L-leucyl-tRNA(Leu) + AMP + diphosphate</text>
        <dbReference type="Rhea" id="RHEA:11688"/>
        <dbReference type="Rhea" id="RHEA-COMP:9613"/>
        <dbReference type="Rhea" id="RHEA-COMP:9622"/>
        <dbReference type="ChEBI" id="CHEBI:30616"/>
        <dbReference type="ChEBI" id="CHEBI:33019"/>
        <dbReference type="ChEBI" id="CHEBI:57427"/>
        <dbReference type="ChEBI" id="CHEBI:78442"/>
        <dbReference type="ChEBI" id="CHEBI:78494"/>
        <dbReference type="ChEBI" id="CHEBI:456215"/>
        <dbReference type="EC" id="6.1.1.4"/>
    </reaction>
</comment>
<comment type="subcellular location">
    <subcellularLocation>
        <location evidence="1">Cytoplasm</location>
    </subcellularLocation>
</comment>
<comment type="similarity">
    <text evidence="1">Belongs to the class-I aminoacyl-tRNA synthetase family.</text>
</comment>
<dbReference type="EC" id="6.1.1.4" evidence="1"/>
<dbReference type="EMBL" id="AE009948">
    <property type="protein sequence ID" value="AAN00916.1"/>
    <property type="molecule type" value="Genomic_DNA"/>
</dbReference>
<dbReference type="RefSeq" id="NP_689043.1">
    <property type="nucleotide sequence ID" value="NC_004116.1"/>
</dbReference>
<dbReference type="RefSeq" id="WP_000145178.1">
    <property type="nucleotide sequence ID" value="NC_004116.1"/>
</dbReference>
<dbReference type="SMR" id="P67515"/>
<dbReference type="STRING" id="208435.SAG2057"/>
<dbReference type="KEGG" id="sag:SAG2057"/>
<dbReference type="PATRIC" id="fig|208435.3.peg.2059"/>
<dbReference type="HOGENOM" id="CLU_004427_0_0_9"/>
<dbReference type="OrthoDB" id="9810365at2"/>
<dbReference type="Proteomes" id="UP000000821">
    <property type="component" value="Chromosome"/>
</dbReference>
<dbReference type="GO" id="GO:0005829">
    <property type="term" value="C:cytosol"/>
    <property type="evidence" value="ECO:0007669"/>
    <property type="project" value="TreeGrafter"/>
</dbReference>
<dbReference type="GO" id="GO:0002161">
    <property type="term" value="F:aminoacyl-tRNA deacylase activity"/>
    <property type="evidence" value="ECO:0007669"/>
    <property type="project" value="InterPro"/>
</dbReference>
<dbReference type="GO" id="GO:0005524">
    <property type="term" value="F:ATP binding"/>
    <property type="evidence" value="ECO:0007669"/>
    <property type="project" value="UniProtKB-UniRule"/>
</dbReference>
<dbReference type="GO" id="GO:0004823">
    <property type="term" value="F:leucine-tRNA ligase activity"/>
    <property type="evidence" value="ECO:0007669"/>
    <property type="project" value="UniProtKB-UniRule"/>
</dbReference>
<dbReference type="GO" id="GO:0006429">
    <property type="term" value="P:leucyl-tRNA aminoacylation"/>
    <property type="evidence" value="ECO:0007669"/>
    <property type="project" value="UniProtKB-UniRule"/>
</dbReference>
<dbReference type="CDD" id="cd07958">
    <property type="entry name" value="Anticodon_Ia_Leu_BEm"/>
    <property type="match status" value="1"/>
</dbReference>
<dbReference type="CDD" id="cd00812">
    <property type="entry name" value="LeuRS_core"/>
    <property type="match status" value="1"/>
</dbReference>
<dbReference type="FunFam" id="1.10.730.10:FF:000012">
    <property type="entry name" value="Leucine--tRNA ligase"/>
    <property type="match status" value="1"/>
</dbReference>
<dbReference type="FunFam" id="3.40.50.620:FF:000056">
    <property type="entry name" value="Leucine--tRNA ligase"/>
    <property type="match status" value="1"/>
</dbReference>
<dbReference type="FunFam" id="3.40.50.620:FF:000077">
    <property type="entry name" value="Leucine--tRNA ligase"/>
    <property type="match status" value="1"/>
</dbReference>
<dbReference type="FunFam" id="1.10.730.10:FF:000011">
    <property type="entry name" value="Leucine--tRNA ligase chloroplastic/mitochondrial"/>
    <property type="match status" value="1"/>
</dbReference>
<dbReference type="Gene3D" id="3.40.50.620">
    <property type="entry name" value="HUPs"/>
    <property type="match status" value="2"/>
</dbReference>
<dbReference type="Gene3D" id="1.10.730.10">
    <property type="entry name" value="Isoleucyl-tRNA Synthetase, Domain 1"/>
    <property type="match status" value="1"/>
</dbReference>
<dbReference type="Gene3D" id="3.90.740.10">
    <property type="entry name" value="Valyl/Leucyl/Isoleucyl-tRNA synthetase, editing domain"/>
    <property type="match status" value="1"/>
</dbReference>
<dbReference type="HAMAP" id="MF_00049_B">
    <property type="entry name" value="Leu_tRNA_synth_B"/>
    <property type="match status" value="1"/>
</dbReference>
<dbReference type="InterPro" id="IPR001412">
    <property type="entry name" value="aa-tRNA-synth_I_CS"/>
</dbReference>
<dbReference type="InterPro" id="IPR002300">
    <property type="entry name" value="aa-tRNA-synth_Ia"/>
</dbReference>
<dbReference type="InterPro" id="IPR002302">
    <property type="entry name" value="Leu-tRNA-ligase"/>
</dbReference>
<dbReference type="InterPro" id="IPR025709">
    <property type="entry name" value="Leu_tRNA-synth_edit"/>
</dbReference>
<dbReference type="InterPro" id="IPR013155">
    <property type="entry name" value="M/V/L/I-tRNA-synth_anticd-bd"/>
</dbReference>
<dbReference type="InterPro" id="IPR015413">
    <property type="entry name" value="Methionyl/Leucyl_tRNA_Synth"/>
</dbReference>
<dbReference type="InterPro" id="IPR014729">
    <property type="entry name" value="Rossmann-like_a/b/a_fold"/>
</dbReference>
<dbReference type="InterPro" id="IPR009080">
    <property type="entry name" value="tRNAsynth_Ia_anticodon-bd"/>
</dbReference>
<dbReference type="InterPro" id="IPR009008">
    <property type="entry name" value="Val/Leu/Ile-tRNA-synth_edit"/>
</dbReference>
<dbReference type="NCBIfam" id="TIGR00396">
    <property type="entry name" value="leuS_bact"/>
    <property type="match status" value="1"/>
</dbReference>
<dbReference type="PANTHER" id="PTHR43740:SF2">
    <property type="entry name" value="LEUCINE--TRNA LIGASE, MITOCHONDRIAL"/>
    <property type="match status" value="1"/>
</dbReference>
<dbReference type="PANTHER" id="PTHR43740">
    <property type="entry name" value="LEUCYL-TRNA SYNTHETASE"/>
    <property type="match status" value="1"/>
</dbReference>
<dbReference type="Pfam" id="PF08264">
    <property type="entry name" value="Anticodon_1"/>
    <property type="match status" value="1"/>
</dbReference>
<dbReference type="Pfam" id="PF00133">
    <property type="entry name" value="tRNA-synt_1"/>
    <property type="match status" value="2"/>
</dbReference>
<dbReference type="Pfam" id="PF13603">
    <property type="entry name" value="tRNA-synt_1_2"/>
    <property type="match status" value="1"/>
</dbReference>
<dbReference type="Pfam" id="PF09334">
    <property type="entry name" value="tRNA-synt_1g"/>
    <property type="match status" value="1"/>
</dbReference>
<dbReference type="PRINTS" id="PR00985">
    <property type="entry name" value="TRNASYNTHLEU"/>
</dbReference>
<dbReference type="SUPFAM" id="SSF47323">
    <property type="entry name" value="Anticodon-binding domain of a subclass of class I aminoacyl-tRNA synthetases"/>
    <property type="match status" value="1"/>
</dbReference>
<dbReference type="SUPFAM" id="SSF52374">
    <property type="entry name" value="Nucleotidylyl transferase"/>
    <property type="match status" value="1"/>
</dbReference>
<dbReference type="SUPFAM" id="SSF50677">
    <property type="entry name" value="ValRS/IleRS/LeuRS editing domain"/>
    <property type="match status" value="1"/>
</dbReference>
<dbReference type="PROSITE" id="PS00178">
    <property type="entry name" value="AA_TRNA_LIGASE_I"/>
    <property type="match status" value="1"/>
</dbReference>
<organism>
    <name type="scientific">Streptococcus agalactiae serotype V (strain ATCC BAA-611 / 2603 V/R)</name>
    <dbReference type="NCBI Taxonomy" id="208435"/>
    <lineage>
        <taxon>Bacteria</taxon>
        <taxon>Bacillati</taxon>
        <taxon>Bacillota</taxon>
        <taxon>Bacilli</taxon>
        <taxon>Lactobacillales</taxon>
        <taxon>Streptococcaceae</taxon>
        <taxon>Streptococcus</taxon>
    </lineage>
</organism>
<accession>P67515</accession>
<accession>Q8DX02</accession>
<accession>Q8E2V2</accession>
<protein>
    <recommendedName>
        <fullName evidence="1">Leucine--tRNA ligase</fullName>
        <ecNumber evidence="1">6.1.1.4</ecNumber>
    </recommendedName>
    <alternativeName>
        <fullName evidence="1">Leucyl-tRNA synthetase</fullName>
        <shortName evidence="1">LeuRS</shortName>
    </alternativeName>
</protein>
<feature type="chain" id="PRO_0000152091" description="Leucine--tRNA ligase">
    <location>
        <begin position="1"/>
        <end position="833"/>
    </location>
</feature>
<feature type="short sequence motif" description="'HIGH' region">
    <location>
        <begin position="41"/>
        <end position="52"/>
    </location>
</feature>
<feature type="short sequence motif" description="'KMSKS' region">
    <location>
        <begin position="610"/>
        <end position="614"/>
    </location>
</feature>
<feature type="binding site" evidence="1">
    <location>
        <position position="613"/>
    </location>
    <ligand>
        <name>ATP</name>
        <dbReference type="ChEBI" id="CHEBI:30616"/>
    </ligand>
</feature>
<evidence type="ECO:0000255" key="1">
    <source>
        <dbReference type="HAMAP-Rule" id="MF_00049"/>
    </source>
</evidence>